<feature type="chain" id="PRO_0000318524" description="Hsp90 co-chaperone Cdc37-like 1">
    <location>
        <begin position="1"/>
        <end position="335"/>
    </location>
</feature>
<feature type="region of interest" description="Disordered" evidence="4">
    <location>
        <begin position="1"/>
        <end position="42"/>
    </location>
</feature>
<feature type="region of interest" description="Self-association" evidence="1">
    <location>
        <begin position="2"/>
        <end position="170"/>
    </location>
</feature>
<feature type="region of interest" description="Self-association and interaction with Hsp90" evidence="1">
    <location>
        <begin position="147"/>
        <end position="276"/>
    </location>
</feature>
<feature type="region of interest" description="Interaction with Hsp70" evidence="1">
    <location>
        <begin position="266"/>
        <end position="335"/>
    </location>
</feature>
<feature type="region of interest" description="Required for interaction with STIP1" evidence="1">
    <location>
        <begin position="277"/>
        <end position="335"/>
    </location>
</feature>
<feature type="coiled-coil region" evidence="3">
    <location>
        <begin position="84"/>
        <end position="120"/>
    </location>
</feature>
<feature type="compositionally biased region" description="Pro residues" evidence="4">
    <location>
        <begin position="1"/>
        <end position="11"/>
    </location>
</feature>
<feature type="compositionally biased region" description="Low complexity" evidence="4">
    <location>
        <begin position="27"/>
        <end position="40"/>
    </location>
</feature>
<feature type="modified residue" description="Phosphoserine" evidence="2">
    <location>
        <position position="32"/>
    </location>
</feature>
<feature type="modified residue" description="Phosphoserine" evidence="2">
    <location>
        <position position="88"/>
    </location>
</feature>
<accession>Q5XIC3</accession>
<proteinExistence type="evidence at transcript level"/>
<reference key="1">
    <citation type="journal article" date="2004" name="Genome Res.">
        <title>The status, quality, and expansion of the NIH full-length cDNA project: the Mammalian Gene Collection (MGC).</title>
        <authorList>
            <consortium name="The MGC Project Team"/>
        </authorList>
    </citation>
    <scope>NUCLEOTIDE SEQUENCE [LARGE SCALE MRNA]</scope>
    <source>
        <tissue>Heart</tissue>
    </source>
</reference>
<protein>
    <recommendedName>
        <fullName>Hsp90 co-chaperone Cdc37-like 1</fullName>
    </recommendedName>
</protein>
<evidence type="ECO:0000250" key="1"/>
<evidence type="ECO:0000250" key="2">
    <source>
        <dbReference type="UniProtKB" id="Q7L3B6"/>
    </source>
</evidence>
<evidence type="ECO:0000255" key="3"/>
<evidence type="ECO:0000256" key="4">
    <source>
        <dbReference type="SAM" id="MobiDB-lite"/>
    </source>
</evidence>
<evidence type="ECO:0000305" key="5"/>
<name>CD37L_RAT</name>
<organism>
    <name type="scientific">Rattus norvegicus</name>
    <name type="common">Rat</name>
    <dbReference type="NCBI Taxonomy" id="10116"/>
    <lineage>
        <taxon>Eukaryota</taxon>
        <taxon>Metazoa</taxon>
        <taxon>Chordata</taxon>
        <taxon>Craniata</taxon>
        <taxon>Vertebrata</taxon>
        <taxon>Euteleostomi</taxon>
        <taxon>Mammalia</taxon>
        <taxon>Eutheria</taxon>
        <taxon>Euarchontoglires</taxon>
        <taxon>Glires</taxon>
        <taxon>Rodentia</taxon>
        <taxon>Myomorpha</taxon>
        <taxon>Muroidea</taxon>
        <taxon>Muridae</taxon>
        <taxon>Murinae</taxon>
        <taxon>Rattus</taxon>
    </lineage>
</organism>
<gene>
    <name type="primary">Cdc37l1</name>
</gene>
<comment type="function">
    <text evidence="1">Co-chaperone that binds to numerous proteins and promotes their interaction with Hsp70 and Hsp90.</text>
</comment>
<comment type="subunit">
    <text evidence="1">Self-associates. Forms complexes with Hsp70 and Hsp90. Interacts with CDC37, FKBP4, PPID and STIP1.</text>
</comment>
<comment type="subcellular location">
    <subcellularLocation>
        <location evidence="1">Cytoplasm</location>
    </subcellularLocation>
</comment>
<comment type="similarity">
    <text evidence="5">Belongs to the CDC37 family.</text>
</comment>
<sequence>MEQPWPPPGPWSFPRTGGETEEESDLDVSPSSSHYSPVPDGGAQMYSHGIELACQRQKEFVKSSVACKWNLAEAQQKLGSLALHNSESLDQEHAKAQTAVSELRQREEEWRQKEEALVQRERTCLWNVDAISKDVFNKSFINQDKRKTEDEDKSQSFMQKYEQKIRHFGMLSRWDDSQRFLSDHPYLVCEETAKYLILWCFHLEAEQKGALMEQIAHQAVVMQFIMEMAKNCNVDPRGCFRLFFQKAKAEEEGYFEAFKNELEAFKARVRLYAQSQSFAPVTVENHAPHSGVGCIGSAEPLPQNPDSLQCCPPAPLCSVDSVVHKEDDDRMMDTV</sequence>
<dbReference type="EMBL" id="BC083761">
    <property type="protein sequence ID" value="AAH83761.1"/>
    <property type="molecule type" value="mRNA"/>
</dbReference>
<dbReference type="RefSeq" id="NP_001011941.1">
    <property type="nucleotide sequence ID" value="NM_001011941.1"/>
</dbReference>
<dbReference type="SMR" id="Q5XIC3"/>
<dbReference type="FunCoup" id="Q5XIC3">
    <property type="interactions" value="1746"/>
</dbReference>
<dbReference type="STRING" id="10116.ENSRNOP00000016000"/>
<dbReference type="PhosphoSitePlus" id="Q5XIC3"/>
<dbReference type="PaxDb" id="10116-ENSRNOP00000016000"/>
<dbReference type="Ensembl" id="ENSRNOT00000016000.6">
    <property type="protein sequence ID" value="ENSRNOP00000016000.4"/>
    <property type="gene ID" value="ENSRNOG00000010967.8"/>
</dbReference>
<dbReference type="GeneID" id="293886"/>
<dbReference type="KEGG" id="rno:293886"/>
<dbReference type="AGR" id="RGD:1309295"/>
<dbReference type="CTD" id="55664"/>
<dbReference type="RGD" id="1309295">
    <property type="gene designation" value="Cdc37l1"/>
</dbReference>
<dbReference type="eggNOG" id="KOG2260">
    <property type="taxonomic scope" value="Eukaryota"/>
</dbReference>
<dbReference type="GeneTree" id="ENSGT00390000013443"/>
<dbReference type="InParanoid" id="Q5XIC3"/>
<dbReference type="OMA" id="YAAKCRN"/>
<dbReference type="OrthoDB" id="440202at2759"/>
<dbReference type="PhylomeDB" id="Q5XIC3"/>
<dbReference type="TreeFam" id="TF101059"/>
<dbReference type="Reactome" id="R-RNO-114608">
    <property type="pathway name" value="Platelet degranulation"/>
</dbReference>
<dbReference type="PRO" id="PR:Q5XIC3"/>
<dbReference type="Proteomes" id="UP000002494">
    <property type="component" value="Chromosome 1"/>
</dbReference>
<dbReference type="Bgee" id="ENSRNOG00000010967">
    <property type="expression patterns" value="Expressed in quadriceps femoris and 19 other cell types or tissues"/>
</dbReference>
<dbReference type="ExpressionAtlas" id="Q5XIC3">
    <property type="expression patterns" value="baseline and differential"/>
</dbReference>
<dbReference type="GO" id="GO:0005737">
    <property type="term" value="C:cytoplasm"/>
    <property type="evidence" value="ECO:0000266"/>
    <property type="project" value="RGD"/>
</dbReference>
<dbReference type="GO" id="GO:0031072">
    <property type="term" value="F:heat shock protein binding"/>
    <property type="evidence" value="ECO:0000318"/>
    <property type="project" value="GO_Central"/>
</dbReference>
<dbReference type="GO" id="GO:0051087">
    <property type="term" value="F:protein-folding chaperone binding"/>
    <property type="evidence" value="ECO:0000318"/>
    <property type="project" value="GO_Central"/>
</dbReference>
<dbReference type="GO" id="GO:0051082">
    <property type="term" value="F:unfolded protein binding"/>
    <property type="evidence" value="ECO:0000318"/>
    <property type="project" value="GO_Central"/>
</dbReference>
<dbReference type="GO" id="GO:0006457">
    <property type="term" value="P:protein folding"/>
    <property type="evidence" value="ECO:0000318"/>
    <property type="project" value="GO_Central"/>
</dbReference>
<dbReference type="GO" id="GO:0050821">
    <property type="term" value="P:protein stabilization"/>
    <property type="evidence" value="ECO:0000318"/>
    <property type="project" value="GO_Central"/>
</dbReference>
<dbReference type="FunFam" id="1.20.58.610:FF:000001">
    <property type="entry name" value="Hsp90 co-chaperone Cdc37-like 1"/>
    <property type="match status" value="1"/>
</dbReference>
<dbReference type="Gene3D" id="1.20.58.610">
    <property type="entry name" value="Cdc37, Hsp90 binding domain"/>
    <property type="match status" value="1"/>
</dbReference>
<dbReference type="InterPro" id="IPR004918">
    <property type="entry name" value="Cdc37"/>
</dbReference>
<dbReference type="InterPro" id="IPR013874">
    <property type="entry name" value="Cdc37_Hsp90-bd"/>
</dbReference>
<dbReference type="InterPro" id="IPR038189">
    <property type="entry name" value="Cdc37_Hsp90-bd_sf"/>
</dbReference>
<dbReference type="PANTHER" id="PTHR12800">
    <property type="entry name" value="CDC37-RELATED"/>
    <property type="match status" value="1"/>
</dbReference>
<dbReference type="PANTHER" id="PTHR12800:SF2">
    <property type="entry name" value="HSP90 CO-CHAPERONE CDC37-LIKE 1"/>
    <property type="match status" value="1"/>
</dbReference>
<dbReference type="Pfam" id="PF08565">
    <property type="entry name" value="CDC37_M"/>
    <property type="match status" value="1"/>
</dbReference>
<dbReference type="SMART" id="SM01070">
    <property type="entry name" value="CDC37_M"/>
    <property type="match status" value="1"/>
</dbReference>
<dbReference type="SUPFAM" id="SSF101391">
    <property type="entry name" value="Hsp90 co-chaperone CDC37"/>
    <property type="match status" value="1"/>
</dbReference>
<keyword id="KW-0143">Chaperone</keyword>
<keyword id="KW-0175">Coiled coil</keyword>
<keyword id="KW-0963">Cytoplasm</keyword>
<keyword id="KW-0597">Phosphoprotein</keyword>
<keyword id="KW-1185">Reference proteome</keyword>